<name>MIMC_MYCS2</name>
<reference key="1">
    <citation type="submission" date="2006-10" db="EMBL/GenBank/DDBJ databases">
        <authorList>
            <person name="Fleischmann R.D."/>
            <person name="Dodson R.J."/>
            <person name="Haft D.H."/>
            <person name="Merkel J.S."/>
            <person name="Nelson W.C."/>
            <person name="Fraser C.M."/>
        </authorList>
    </citation>
    <scope>NUCLEOTIDE SEQUENCE [LARGE SCALE GENOMIC DNA]</scope>
    <source>
        <strain>ATCC 700084 / mc(2)155</strain>
    </source>
</reference>
<reference key="2">
    <citation type="journal article" date="2007" name="Genome Biol.">
        <title>Interrupted coding sequences in Mycobacterium smegmatis: authentic mutations or sequencing errors?</title>
        <authorList>
            <person name="Deshayes C."/>
            <person name="Perrodou E."/>
            <person name="Gallien S."/>
            <person name="Euphrasie D."/>
            <person name="Schaeffer C."/>
            <person name="Van-Dorsselaer A."/>
            <person name="Poch O."/>
            <person name="Lecompte O."/>
            <person name="Reyrat J.-M."/>
        </authorList>
    </citation>
    <scope>NUCLEOTIDE SEQUENCE [LARGE SCALE GENOMIC DNA]</scope>
    <source>
        <strain evidence="12">ATCC 700084 / mc(2)155</strain>
    </source>
</reference>
<reference key="3">
    <citation type="journal article" date="2009" name="Genome Res.">
        <title>Ortho-proteogenomics: multiple proteomes investigation through orthology and a new MS-based protocol.</title>
        <authorList>
            <person name="Gallien S."/>
            <person name="Perrodou E."/>
            <person name="Carapito C."/>
            <person name="Deshayes C."/>
            <person name="Reyrat J.-M."/>
            <person name="Van Dorsselaer A."/>
            <person name="Poch O."/>
            <person name="Schaeffer C."/>
            <person name="Lecompte O."/>
        </authorList>
    </citation>
    <scope>NUCLEOTIDE SEQUENCE [LARGE SCALE GENOMIC DNA]</scope>
    <source>
        <strain evidence="12">ATCC 700084 / mc(2)155</strain>
    </source>
</reference>
<reference key="4">
    <citation type="journal article" date="2011" name="Appl. Environ. Microbiol.">
        <title>Identification of the monooxygenase gene clusters responsible for the regioselective oxidation of phenol to hydroquinone in mycobacteria.</title>
        <authorList>
            <person name="Furuya T."/>
            <person name="Hirose S."/>
            <person name="Osanai H."/>
            <person name="Semba H."/>
            <person name="Kino K."/>
        </authorList>
    </citation>
    <scope>FUNCTION</scope>
    <scope>CATALYTIC ACTIVITY</scope>
    <scope>SUBSTRATE SPECIFICITY</scope>
    <scope>INDUCTION BY ACETONE</scope>
    <scope>SUBUNIT</scope>
    <source>
        <strain>ATCC 700084 / mc(2)155</strain>
    </source>
</reference>
<reference key="5">
    <citation type="journal article" date="2011" name="J. Bacteriol.">
        <title>Identification of the regulator gene responsible for the acetone-responsive expression of the binuclear iron monooxygenase gene cluster in mycobacteria.</title>
        <authorList>
            <person name="Furuya T."/>
            <person name="Hirose S."/>
            <person name="Semba H."/>
            <person name="Kino K."/>
        </authorList>
    </citation>
    <scope>INDUCTION BY MIMR</scope>
    <source>
        <strain>ATCC 700084 / mc(2)155</strain>
    </source>
</reference>
<reference key="6">
    <citation type="journal article" date="2013" name="Appl. Environ. Microbiol.">
        <title>Reconstitution of active mycobacterial binuclear iron monooxygenase complex in Escherichia coli.</title>
        <authorList>
            <person name="Furuya T."/>
            <person name="Hayashi M."/>
            <person name="Kino K."/>
        </authorList>
    </citation>
    <scope>FUNCTION AS A PHENOL 4-MONOOXYGENASE</scope>
    <scope>CATALYTIC ACTIVITY</scope>
    <source>
        <strain>ATCC 700084 / mc(2)155</strain>
    </source>
</reference>
<reference key="7">
    <citation type="journal article" date="2013" name="FEBS J.">
        <title>The mycobacterial binuclear iron monooxygenases require a specific chaperonin-like protein for functional expression in a heterologous host.</title>
        <authorList>
            <person name="Furuya T."/>
            <person name="Hayashi M."/>
            <person name="Semba H."/>
            <person name="Kino K."/>
        </authorList>
    </citation>
    <scope>FUNCTION AS A PHENOL 4-MONOOXYGENASE</scope>
    <scope>CATALYTIC ACTIVITY</scope>
    <scope>SUBUNIT</scope>
    <source>
        <strain>ATCC 700084 / mc(2)155</strain>
    </source>
</reference>
<reference key="8">
    <citation type="journal article" date="2015" name="FEMS Microbiol. Lett.">
        <title>Catalytic function of the mycobacterial binuclear iron monooxygenase in acetone metabolism.</title>
        <authorList>
            <person name="Furuya T."/>
            <person name="Nakao T."/>
            <person name="Kino K."/>
        </authorList>
    </citation>
    <scope>FUNCTION AS AN ACETONE 1-MONOOXYGENASE</scope>
    <scope>CATALYTIC ACTIVITY</scope>
    <scope>SUBSTRATE SPECIFICITY</scope>
    <source>
        <strain>ATCC 700084 / mc(2)155</strain>
    </source>
</reference>
<sequence>MSAPEKPRERSFPKIEFTDSEAGAKEFPSSKSRSYSYFTPAKLRATMYEDVTVDVQPDPDRHLTQGWIYGFGNGPGGYPKDWTTAKSSDWHAFRDPNEEWNQTIYRNNAAVVRQVELCLKNAKRARVYDGWNSTWLTFIERNVGAWMHAENGLALHVFTSIQRSGPTNMINTAVAVNAAHKMRFAQDLALFNLDLAEATEAFDGSAHRAVWQEAREWQATRKVVEELTAVGDWCQLLFATNIVFEQLVGSLFRTELIMQIAARNGDYITPTIVGTGEHDYDRDLNYTRNLFRLLTRDPEHGEANKALFTEWLGIWVPRCLDAALALQPIWSAPADKAVTFASSLDAAKAKFTALLEEIDLDIPEELNK</sequence>
<proteinExistence type="evidence at protein level"/>
<keyword id="KW-0503">Monooxygenase</keyword>
<keyword id="KW-0520">NAD</keyword>
<keyword id="KW-0560">Oxidoreductase</keyword>
<keyword id="KW-1185">Reference proteome</keyword>
<comment type="function">
    <text evidence="2 4 5 6">Component of the propane 2-monooxygenase multicomponent enzyme system which is involved in the degradation of propane via the O2-dependent hydroxylation of propane (PubMed:21183637). Also involved in the degradation of acetone via the O2-dependent hydroxylation of acetone (PubMed:26293913). Also able to catalyze the oxidation of phenol, methylethylketone (2-butanone), 1-propanol and 2-propanol (PubMed:21183637, PubMed:23171424, PubMed:23892738, PubMed:26293913).</text>
</comment>
<comment type="catalytic activity">
    <reaction evidence="10">
        <text>propane + NADH + O2 + H(+) = propan-2-ol + NAD(+) + H2O</text>
        <dbReference type="Rhea" id="RHEA:49992"/>
        <dbReference type="ChEBI" id="CHEBI:15377"/>
        <dbReference type="ChEBI" id="CHEBI:15378"/>
        <dbReference type="ChEBI" id="CHEBI:15379"/>
        <dbReference type="ChEBI" id="CHEBI:17824"/>
        <dbReference type="ChEBI" id="CHEBI:32879"/>
        <dbReference type="ChEBI" id="CHEBI:57540"/>
        <dbReference type="ChEBI" id="CHEBI:57945"/>
        <dbReference type="EC" id="1.14.13.227"/>
    </reaction>
</comment>
<comment type="catalytic activity">
    <reaction evidence="6">
        <text>acetone + NADH + O2 + H(+) = hydroxyacetone + NAD(+) + H2O</text>
        <dbReference type="Rhea" id="RHEA:55788"/>
        <dbReference type="ChEBI" id="CHEBI:15347"/>
        <dbReference type="ChEBI" id="CHEBI:15377"/>
        <dbReference type="ChEBI" id="CHEBI:15378"/>
        <dbReference type="ChEBI" id="CHEBI:15379"/>
        <dbReference type="ChEBI" id="CHEBI:27957"/>
        <dbReference type="ChEBI" id="CHEBI:57540"/>
        <dbReference type="ChEBI" id="CHEBI:57945"/>
    </reaction>
</comment>
<comment type="catalytic activity">
    <reaction evidence="6">
        <text>butan-2-one + NADH + O2 + H(+) = 1-hydroxy-2-butanone + NAD(+) + H2O</text>
        <dbReference type="Rhea" id="RHEA:55792"/>
        <dbReference type="ChEBI" id="CHEBI:15377"/>
        <dbReference type="ChEBI" id="CHEBI:15378"/>
        <dbReference type="ChEBI" id="CHEBI:15379"/>
        <dbReference type="ChEBI" id="CHEBI:28398"/>
        <dbReference type="ChEBI" id="CHEBI:57540"/>
        <dbReference type="ChEBI" id="CHEBI:57945"/>
        <dbReference type="ChEBI" id="CHEBI:88390"/>
    </reaction>
</comment>
<comment type="catalytic activity">
    <reaction evidence="4 5 10">
        <text>phenol + NADH + O2 + H(+) = hydroquinone + NAD(+) + H2O</text>
        <dbReference type="Rhea" id="RHEA:55796"/>
        <dbReference type="ChEBI" id="CHEBI:15377"/>
        <dbReference type="ChEBI" id="CHEBI:15378"/>
        <dbReference type="ChEBI" id="CHEBI:15379"/>
        <dbReference type="ChEBI" id="CHEBI:15882"/>
        <dbReference type="ChEBI" id="CHEBI:17594"/>
        <dbReference type="ChEBI" id="CHEBI:57540"/>
        <dbReference type="ChEBI" id="CHEBI:57945"/>
    </reaction>
</comment>
<comment type="subunit">
    <text evidence="4 10">The propane 2-monooxygenase multicomponent enzyme system is composed of an electron transfer component and a monooxygenase component interacting with the effector protein MimD. The electron transfer component is composed of a reductase (MimB), and the monooxygenase component is formed by a large subunit (MimA) and a small subunit (MimC) (PubMed:21183637). Requires the presence of the chaperonin-like protein MimG to ensure a productive folding, resulting of a soluble MimC, which leads to the active form of MimABCD (PubMed:23171424).</text>
</comment>
<comment type="induction">
    <text evidence="2 3">By acetone (PubMed:21183637). Transcriptionally activated by MimR (PubMed:21856847).</text>
</comment>
<comment type="similarity">
    <text evidence="9">Belongs to the TmoE/XamoE family.</text>
</comment>
<accession>I7FA35</accession>
<feature type="chain" id="PRO_0000442973" description="Propane 2-monooxygenase, hydroxylase component small subunit">
    <location>
        <begin position="1"/>
        <end position="368"/>
    </location>
</feature>
<feature type="region of interest" description="Disordered" evidence="1">
    <location>
        <begin position="1"/>
        <end position="32"/>
    </location>
</feature>
<feature type="compositionally biased region" description="Basic and acidic residues" evidence="1">
    <location>
        <begin position="1"/>
        <end position="17"/>
    </location>
</feature>
<dbReference type="EC" id="1.14.13.227" evidence="10"/>
<dbReference type="EMBL" id="CP000480">
    <property type="status" value="NOT_ANNOTATED_CDS"/>
    <property type="molecule type" value="Genomic_DNA"/>
</dbReference>
<dbReference type="EMBL" id="CP001663">
    <property type="protein sequence ID" value="AFP38400.1"/>
    <property type="molecule type" value="Genomic_DNA"/>
</dbReference>
<dbReference type="RefSeq" id="WP_014877261.1">
    <property type="nucleotide sequence ID" value="NZ_SIJM01000020.1"/>
</dbReference>
<dbReference type="SMR" id="I7FA35"/>
<dbReference type="PaxDb" id="246196-MSMEI_1929"/>
<dbReference type="KEGG" id="msg:MSMEI_1929"/>
<dbReference type="Proteomes" id="UP000000757">
    <property type="component" value="Chromosome"/>
</dbReference>
<dbReference type="Proteomes" id="UP000006158">
    <property type="component" value="Chromosome"/>
</dbReference>
<dbReference type="GO" id="GO:0016709">
    <property type="term" value="F:oxidoreductase activity, acting on paired donors, with incorporation or reduction of molecular oxygen, NAD(P)H as one donor, and incorporation of one atom of oxygen"/>
    <property type="evidence" value="ECO:0007669"/>
    <property type="project" value="InterPro"/>
</dbReference>
<dbReference type="CDD" id="cd01058">
    <property type="entry name" value="AAMH_B"/>
    <property type="match status" value="1"/>
</dbReference>
<dbReference type="Gene3D" id="1.10.620.20">
    <property type="entry name" value="Ribonucleotide Reductase, subunit A"/>
    <property type="match status" value="1"/>
</dbReference>
<dbReference type="InterPro" id="IPR009078">
    <property type="entry name" value="Ferritin-like_SF"/>
</dbReference>
<dbReference type="InterPro" id="IPR012078">
    <property type="entry name" value="MP_mOase_hydro"/>
</dbReference>
<dbReference type="InterPro" id="IPR003430">
    <property type="entry name" value="Phenol_Hydrox"/>
</dbReference>
<dbReference type="InterPro" id="IPR012348">
    <property type="entry name" value="RNR-like"/>
</dbReference>
<dbReference type="Pfam" id="PF02332">
    <property type="entry name" value="Phenol_Hydrox"/>
    <property type="match status" value="1"/>
</dbReference>
<dbReference type="PIRSF" id="PIRSF000040">
    <property type="entry name" value="MMOH_comp"/>
    <property type="match status" value="1"/>
</dbReference>
<dbReference type="SUPFAM" id="SSF47240">
    <property type="entry name" value="Ferritin-like"/>
    <property type="match status" value="1"/>
</dbReference>
<gene>
    <name evidence="7" type="primary">mimC</name>
    <name type="ordered locus">MSMEG_1973</name>
    <name evidence="11" type="ordered locus">MSMEI_1929</name>
</gene>
<organism>
    <name type="scientific">Mycolicibacterium smegmatis (strain ATCC 700084 / mc(2)155)</name>
    <name type="common">Mycobacterium smegmatis</name>
    <dbReference type="NCBI Taxonomy" id="246196"/>
    <lineage>
        <taxon>Bacteria</taxon>
        <taxon>Bacillati</taxon>
        <taxon>Actinomycetota</taxon>
        <taxon>Actinomycetes</taxon>
        <taxon>Mycobacteriales</taxon>
        <taxon>Mycobacteriaceae</taxon>
        <taxon>Mycolicibacterium</taxon>
    </lineage>
</organism>
<evidence type="ECO:0000256" key="1">
    <source>
        <dbReference type="SAM" id="MobiDB-lite"/>
    </source>
</evidence>
<evidence type="ECO:0000269" key="2">
    <source>
    </source>
</evidence>
<evidence type="ECO:0000269" key="3">
    <source>
    </source>
</evidence>
<evidence type="ECO:0000269" key="4">
    <source>
    </source>
</evidence>
<evidence type="ECO:0000269" key="5">
    <source>
    </source>
</evidence>
<evidence type="ECO:0000269" key="6">
    <source>
    </source>
</evidence>
<evidence type="ECO:0000303" key="7">
    <source>
    </source>
</evidence>
<evidence type="ECO:0000303" key="8">
    <source>
    </source>
</evidence>
<evidence type="ECO:0000305" key="9"/>
<evidence type="ECO:0000305" key="10">
    <source>
    </source>
</evidence>
<evidence type="ECO:0000312" key="11">
    <source>
        <dbReference type="EMBL" id="AFP38400.1"/>
    </source>
</evidence>
<evidence type="ECO:0000312" key="12">
    <source>
        <dbReference type="Proteomes" id="UP000006158"/>
    </source>
</evidence>
<protein>
    <recommendedName>
        <fullName evidence="7">Propane 2-monooxygenase, hydroxylase component small subunit</fullName>
        <ecNumber evidence="10">1.14.13.227</ecNumber>
    </recommendedName>
    <alternativeName>
        <fullName evidence="8">Acetone 1-monooxygenase</fullName>
    </alternativeName>
    <alternativeName>
        <fullName evidence="8">Methylethylketone 1-monooxygenase</fullName>
    </alternativeName>
    <alternativeName>
        <fullName evidence="7">Phenol 4-monooxygenase</fullName>
    </alternativeName>
</protein>